<organism>
    <name type="scientific">Homo sapiens</name>
    <name type="common">Human</name>
    <dbReference type="NCBI Taxonomy" id="9606"/>
    <lineage>
        <taxon>Eukaryota</taxon>
        <taxon>Metazoa</taxon>
        <taxon>Chordata</taxon>
        <taxon>Craniata</taxon>
        <taxon>Vertebrata</taxon>
        <taxon>Euteleostomi</taxon>
        <taxon>Mammalia</taxon>
        <taxon>Eutheria</taxon>
        <taxon>Euarchontoglires</taxon>
        <taxon>Primates</taxon>
        <taxon>Haplorrhini</taxon>
        <taxon>Catarrhini</taxon>
        <taxon>Hominidae</taxon>
        <taxon>Homo</taxon>
    </lineage>
</organism>
<proteinExistence type="evidence at protein level"/>
<protein>
    <recommendedName>
        <fullName evidence="13">Sodium-coupled neutral amino acid symporter 1</fullName>
    </recommendedName>
    <alternativeName>
        <fullName>Amino acid transporter A1</fullName>
    </alternativeName>
    <alternativeName>
        <fullName>N-system amino acid transporter 2</fullName>
    </alternativeName>
    <alternativeName>
        <fullName>Solute carrier family 38 member 1</fullName>
    </alternativeName>
    <alternativeName>
        <fullName>System A amino acid transporter 1</fullName>
    </alternativeName>
    <alternativeName>
        <fullName>System N amino acid transporter 1</fullName>
    </alternativeName>
</protein>
<accession>Q9H2H9</accession>
<accession>Q8NC61</accession>
<accession>Q8NCF8</accession>
<accession>Q96JX2</accession>
<accession>Q9H2Q2</accession>
<name>S38A1_HUMAN</name>
<reference key="1">
    <citation type="journal article" date="2000" name="Biochem. Biophys. Res. Commun.">
        <title>Cloning and functional expression of ATA1, a subtype of amino acid transporter A, from human placenta.</title>
        <authorList>
            <person name="Wang H."/>
            <person name="Huang W."/>
            <person name="Sugawara M."/>
            <person name="Devoe L.D."/>
            <person name="Leibach F.H."/>
            <person name="Prasad P.D."/>
            <person name="Ganapathy V."/>
        </authorList>
    </citation>
    <scope>NUCLEOTIDE SEQUENCE [MRNA]</scope>
    <scope>FUNCTION</scope>
    <scope>BIOPHYSICOCHEMICAL PROPERTIES</scope>
    <scope>TISSUE SPECIFICITY</scope>
    <source>
        <tissue>Placenta</tissue>
    </source>
</reference>
<reference key="2">
    <citation type="submission" date="2000-03" db="EMBL/GenBank/DDBJ databases">
        <authorList>
            <person name="Xu X."/>
            <person name="Yang Y."/>
            <person name="Gao G."/>
            <person name="Xiao H."/>
            <person name="Chen Z."/>
            <person name="Han Z."/>
        </authorList>
    </citation>
    <scope>NUCLEOTIDE SEQUENCE [MRNA]</scope>
    <source>
        <tissue>Hypothalamus</tissue>
    </source>
</reference>
<reference key="3">
    <citation type="journal article" date="2004" name="Nat. Genet.">
        <title>Complete sequencing and characterization of 21,243 full-length human cDNAs.</title>
        <authorList>
            <person name="Ota T."/>
            <person name="Suzuki Y."/>
            <person name="Nishikawa T."/>
            <person name="Otsuki T."/>
            <person name="Sugiyama T."/>
            <person name="Irie R."/>
            <person name="Wakamatsu A."/>
            <person name="Hayashi K."/>
            <person name="Sato H."/>
            <person name="Nagai K."/>
            <person name="Kimura K."/>
            <person name="Makita H."/>
            <person name="Sekine M."/>
            <person name="Obayashi M."/>
            <person name="Nishi T."/>
            <person name="Shibahara T."/>
            <person name="Tanaka T."/>
            <person name="Ishii S."/>
            <person name="Yamamoto J."/>
            <person name="Saito K."/>
            <person name="Kawai Y."/>
            <person name="Isono Y."/>
            <person name="Nakamura Y."/>
            <person name="Nagahari K."/>
            <person name="Murakami K."/>
            <person name="Yasuda T."/>
            <person name="Iwayanagi T."/>
            <person name="Wagatsuma M."/>
            <person name="Shiratori A."/>
            <person name="Sudo H."/>
            <person name="Hosoiri T."/>
            <person name="Kaku Y."/>
            <person name="Kodaira H."/>
            <person name="Kondo H."/>
            <person name="Sugawara M."/>
            <person name="Takahashi M."/>
            <person name="Kanda K."/>
            <person name="Yokoi T."/>
            <person name="Furuya T."/>
            <person name="Kikkawa E."/>
            <person name="Omura Y."/>
            <person name="Abe K."/>
            <person name="Kamihara K."/>
            <person name="Katsuta N."/>
            <person name="Sato K."/>
            <person name="Tanikawa M."/>
            <person name="Yamazaki M."/>
            <person name="Ninomiya K."/>
            <person name="Ishibashi T."/>
            <person name="Yamashita H."/>
            <person name="Murakawa K."/>
            <person name="Fujimori K."/>
            <person name="Tanai H."/>
            <person name="Kimata M."/>
            <person name="Watanabe M."/>
            <person name="Hiraoka S."/>
            <person name="Chiba Y."/>
            <person name="Ishida S."/>
            <person name="Ono Y."/>
            <person name="Takiguchi S."/>
            <person name="Watanabe S."/>
            <person name="Yosida M."/>
            <person name="Hotuta T."/>
            <person name="Kusano J."/>
            <person name="Kanehori K."/>
            <person name="Takahashi-Fujii A."/>
            <person name="Hara H."/>
            <person name="Tanase T.-O."/>
            <person name="Nomura Y."/>
            <person name="Togiya S."/>
            <person name="Komai F."/>
            <person name="Hara R."/>
            <person name="Takeuchi K."/>
            <person name="Arita M."/>
            <person name="Imose N."/>
            <person name="Musashino K."/>
            <person name="Yuuki H."/>
            <person name="Oshima A."/>
            <person name="Sasaki N."/>
            <person name="Aotsuka S."/>
            <person name="Yoshikawa Y."/>
            <person name="Matsunawa H."/>
            <person name="Ichihara T."/>
            <person name="Shiohata N."/>
            <person name="Sano S."/>
            <person name="Moriya S."/>
            <person name="Momiyama H."/>
            <person name="Satoh N."/>
            <person name="Takami S."/>
            <person name="Terashima Y."/>
            <person name="Suzuki O."/>
            <person name="Nakagawa S."/>
            <person name="Senoh A."/>
            <person name="Mizoguchi H."/>
            <person name="Goto Y."/>
            <person name="Shimizu F."/>
            <person name="Wakebe H."/>
            <person name="Hishigaki H."/>
            <person name="Watanabe T."/>
            <person name="Sugiyama A."/>
            <person name="Takemoto M."/>
            <person name="Kawakami B."/>
            <person name="Yamazaki M."/>
            <person name="Watanabe K."/>
            <person name="Kumagai A."/>
            <person name="Itakura S."/>
            <person name="Fukuzumi Y."/>
            <person name="Fujimori Y."/>
            <person name="Komiyama M."/>
            <person name="Tashiro H."/>
            <person name="Tanigami A."/>
            <person name="Fujiwara T."/>
            <person name="Ono T."/>
            <person name="Yamada K."/>
            <person name="Fujii Y."/>
            <person name="Ozaki K."/>
            <person name="Hirao M."/>
            <person name="Ohmori Y."/>
            <person name="Kawabata A."/>
            <person name="Hikiji T."/>
            <person name="Kobatake N."/>
            <person name="Inagaki H."/>
            <person name="Ikema Y."/>
            <person name="Okamoto S."/>
            <person name="Okitani R."/>
            <person name="Kawakami T."/>
            <person name="Noguchi S."/>
            <person name="Itoh T."/>
            <person name="Shigeta K."/>
            <person name="Senba T."/>
            <person name="Matsumura K."/>
            <person name="Nakajima Y."/>
            <person name="Mizuno T."/>
            <person name="Morinaga M."/>
            <person name="Sasaki M."/>
            <person name="Togashi T."/>
            <person name="Oyama M."/>
            <person name="Hata H."/>
            <person name="Watanabe M."/>
            <person name="Komatsu T."/>
            <person name="Mizushima-Sugano J."/>
            <person name="Satoh T."/>
            <person name="Shirai Y."/>
            <person name="Takahashi Y."/>
            <person name="Nakagawa K."/>
            <person name="Okumura K."/>
            <person name="Nagase T."/>
            <person name="Nomura N."/>
            <person name="Kikuchi H."/>
            <person name="Masuho Y."/>
            <person name="Yamashita R."/>
            <person name="Nakai K."/>
            <person name="Yada T."/>
            <person name="Nakamura Y."/>
            <person name="Ohara O."/>
            <person name="Isogai T."/>
            <person name="Sugano S."/>
        </authorList>
    </citation>
    <scope>NUCLEOTIDE SEQUENCE [LARGE SCALE MRNA]</scope>
    <source>
        <tissue>Placenta</tissue>
        <tissue>Teratocarcinoma</tissue>
    </source>
</reference>
<reference key="4">
    <citation type="journal article" date="2005" name="DNA Res.">
        <title>Signal sequence and keyword trap in silico for selection of full-length human cDNAs encoding secretion or membrane proteins from oligo-capped cDNA libraries.</title>
        <authorList>
            <person name="Otsuki T."/>
            <person name="Ota T."/>
            <person name="Nishikawa T."/>
            <person name="Hayashi K."/>
            <person name="Suzuki Y."/>
            <person name="Yamamoto J."/>
            <person name="Wakamatsu A."/>
            <person name="Kimura K."/>
            <person name="Sakamoto K."/>
            <person name="Hatano N."/>
            <person name="Kawai Y."/>
            <person name="Ishii S."/>
            <person name="Saito K."/>
            <person name="Kojima S."/>
            <person name="Sugiyama T."/>
            <person name="Ono T."/>
            <person name="Okano K."/>
            <person name="Yoshikawa Y."/>
            <person name="Aotsuka S."/>
            <person name="Sasaki N."/>
            <person name="Hattori A."/>
            <person name="Okumura K."/>
            <person name="Nagai K."/>
            <person name="Sugano S."/>
            <person name="Isogai T."/>
        </authorList>
    </citation>
    <scope>NUCLEOTIDE SEQUENCE [LARGE SCALE MRNA]</scope>
    <source>
        <tissue>Teratocarcinoma</tissue>
    </source>
</reference>
<reference key="5">
    <citation type="submission" date="2005-07" db="EMBL/GenBank/DDBJ databases">
        <authorList>
            <person name="Mural R.J."/>
            <person name="Istrail S."/>
            <person name="Sutton G.G."/>
            <person name="Florea L."/>
            <person name="Halpern A.L."/>
            <person name="Mobarry C.M."/>
            <person name="Lippert R."/>
            <person name="Walenz B."/>
            <person name="Shatkay H."/>
            <person name="Dew I."/>
            <person name="Miller J.R."/>
            <person name="Flanigan M.J."/>
            <person name="Edwards N.J."/>
            <person name="Bolanos R."/>
            <person name="Fasulo D."/>
            <person name="Halldorsson B.V."/>
            <person name="Hannenhalli S."/>
            <person name="Turner R."/>
            <person name="Yooseph S."/>
            <person name="Lu F."/>
            <person name="Nusskern D.R."/>
            <person name="Shue B.C."/>
            <person name="Zheng X.H."/>
            <person name="Zhong F."/>
            <person name="Delcher A.L."/>
            <person name="Huson D.H."/>
            <person name="Kravitz S.A."/>
            <person name="Mouchard L."/>
            <person name="Reinert K."/>
            <person name="Remington K.A."/>
            <person name="Clark A.G."/>
            <person name="Waterman M.S."/>
            <person name="Eichler E.E."/>
            <person name="Adams M.D."/>
            <person name="Hunkapiller M.W."/>
            <person name="Myers E.W."/>
            <person name="Venter J.C."/>
        </authorList>
    </citation>
    <scope>NUCLEOTIDE SEQUENCE [LARGE SCALE GENOMIC DNA]</scope>
</reference>
<reference key="6">
    <citation type="journal article" date="2004" name="Genome Res.">
        <title>The status, quality, and expansion of the NIH full-length cDNA project: the Mammalian Gene Collection (MGC).</title>
        <authorList>
            <consortium name="The MGC Project Team"/>
        </authorList>
    </citation>
    <scope>NUCLEOTIDE SEQUENCE [LARGE SCALE MRNA]</scope>
    <source>
        <tissue>Eye</tissue>
    </source>
</reference>
<reference key="7">
    <citation type="journal article" date="2003" name="Am. J. Physiol.">
        <title>Hypoxia reduces expression and function of system A amino acid transporters in cultured term human trophoblasts.</title>
        <authorList>
            <person name="Nelson D.M."/>
            <person name="Smith S.D."/>
            <person name="Furesz T.C."/>
            <person name="Sadovsky Y."/>
            <person name="Ganapathy V."/>
            <person name="Parvin C.A."/>
            <person name="Smith C.H."/>
        </authorList>
    </citation>
    <scope>TISSUE SPECIFICITY</scope>
    <scope>INDUCTION</scope>
</reference>
<reference key="8">
    <citation type="journal article" date="2004" name="Cereb. Cortex">
        <title>Localization of the glutamine transporter SNAT1 in rat cerebral cortex and neighboring structures, with a note on its localization in human cortex.</title>
        <authorList>
            <person name="Melone M."/>
            <person name="Quagliano F."/>
            <person name="Barbaresi P."/>
            <person name="Varoqui H."/>
            <person name="Erickson J.D."/>
            <person name="Conti F."/>
        </authorList>
    </citation>
    <scope>SUBCELLULAR LOCATION</scope>
    <scope>TISSUE SPECIFICITY</scope>
</reference>
<reference key="9">
    <citation type="journal article" date="2006" name="Am. J. Physiol.">
        <title>SNAT4 isoform of system A amino acid transporter is expressed in human placenta.</title>
        <authorList>
            <person name="Desforges M."/>
            <person name="Lacey H.A."/>
            <person name="Glazier J.D."/>
            <person name="Greenwood S.L."/>
            <person name="Mynett K.J."/>
            <person name="Speake P.F."/>
            <person name="Sibley C.P."/>
        </authorList>
    </citation>
    <scope>TISSUE SPECIFICITY</scope>
</reference>
<reference key="10">
    <citation type="journal article" date="2006" name="Cell">
        <title>Global, in vivo, and site-specific phosphorylation dynamics in signaling networks.</title>
        <authorList>
            <person name="Olsen J.V."/>
            <person name="Blagoev B."/>
            <person name="Gnad F."/>
            <person name="Macek B."/>
            <person name="Kumar C."/>
            <person name="Mortensen P."/>
            <person name="Mann M."/>
        </authorList>
    </citation>
    <scope>IDENTIFICATION BY MASS SPECTROMETRY [LARGE SCALE ANALYSIS]</scope>
    <source>
        <tissue>Cervix carcinoma</tissue>
    </source>
</reference>
<reference key="11">
    <citation type="journal article" date="2006" name="J. Neurosci. Res.">
        <title>Functional expression of a glutamine transporter responsive to down-regulation by lipopolysaccharide through reduced promoter activity in cultured rat neocortical astrocytes.</title>
        <authorList>
            <person name="Ogura M."/>
            <person name="Nakamichi N."/>
            <person name="Takano K."/>
            <person name="Oikawa H."/>
            <person name="Kambe Y."/>
            <person name="Ohno Y."/>
            <person name="Taniura H."/>
            <person name="Yoneda Y."/>
        </authorList>
    </citation>
    <scope>INDUCTION BY LPS</scope>
</reference>
<reference key="12">
    <citation type="journal article" date="2008" name="Mol. Cell">
        <title>Kinase-selective enrichment enables quantitative phosphoproteomics of the kinome across the cell cycle.</title>
        <authorList>
            <person name="Daub H."/>
            <person name="Olsen J.V."/>
            <person name="Bairlein M."/>
            <person name="Gnad F."/>
            <person name="Oppermann F.S."/>
            <person name="Korner R."/>
            <person name="Greff Z."/>
            <person name="Keri G."/>
            <person name="Stemmann O."/>
            <person name="Mann M."/>
        </authorList>
    </citation>
    <scope>IDENTIFICATION BY MASS SPECTROMETRY [LARGE SCALE ANALYSIS]</scope>
    <source>
        <tissue>Cervix carcinoma</tissue>
    </source>
</reference>
<reference key="13">
    <citation type="journal article" date="2008" name="Proc. Natl. Acad. Sci. U.S.A.">
        <title>A quantitative atlas of mitotic phosphorylation.</title>
        <authorList>
            <person name="Dephoure N."/>
            <person name="Zhou C."/>
            <person name="Villen J."/>
            <person name="Beausoleil S.A."/>
            <person name="Bakalarski C.E."/>
            <person name="Elledge S.J."/>
            <person name="Gygi S.P."/>
        </authorList>
    </citation>
    <scope>PHOSPHORYLATION [LARGE SCALE ANALYSIS] AT SER-25; SER-28; SER-52; THR-54 AND SER-56</scope>
    <scope>IDENTIFICATION BY MASS SPECTROMETRY [LARGE SCALE ANALYSIS]</scope>
    <source>
        <tissue>Cervix carcinoma</tissue>
    </source>
</reference>
<reference key="14">
    <citation type="journal article" date="2010" name="Biochem. Biophys. Res. Commun.">
        <title>The contribution of SNAT1 to system A amino acid transporter activity in human placental trophoblast.</title>
        <authorList>
            <person name="Desforges M."/>
            <person name="Greenwood S.L."/>
            <person name="Glazier J.D."/>
            <person name="Westwood M."/>
            <person name="Sibley C.P."/>
        </authorList>
    </citation>
    <scope>FUNCTION</scope>
    <scope>TRANSPORTER ACTIVITY</scope>
    <scope>TISSUE SPECIFICITY</scope>
</reference>
<reference key="15">
    <citation type="journal article" date="2010" name="Sci. Signal.">
        <title>Quantitative phosphoproteomics reveals widespread full phosphorylation site occupancy during mitosis.</title>
        <authorList>
            <person name="Olsen J.V."/>
            <person name="Vermeulen M."/>
            <person name="Santamaria A."/>
            <person name="Kumar C."/>
            <person name="Miller M.L."/>
            <person name="Jensen L.J."/>
            <person name="Gnad F."/>
            <person name="Cox J."/>
            <person name="Jensen T.S."/>
            <person name="Nigg E.A."/>
            <person name="Brunak S."/>
            <person name="Mann M."/>
        </authorList>
    </citation>
    <scope>PHOSPHORYLATION [LARGE SCALE ANALYSIS] AT SER-52; THR-54 AND SER-56</scope>
    <scope>IDENTIFICATION BY MASS SPECTROMETRY [LARGE SCALE ANALYSIS]</scope>
    <source>
        <tissue>Cervix carcinoma</tissue>
    </source>
</reference>
<reference key="16">
    <citation type="journal article" date="2011" name="Sci. Signal.">
        <title>System-wide temporal characterization of the proteome and phosphoproteome of human embryonic stem cell differentiation.</title>
        <authorList>
            <person name="Rigbolt K.T."/>
            <person name="Prokhorova T.A."/>
            <person name="Akimov V."/>
            <person name="Henningsen J."/>
            <person name="Johansen P.T."/>
            <person name="Kratchmarova I."/>
            <person name="Kassem M."/>
            <person name="Mann M."/>
            <person name="Olsen J.V."/>
            <person name="Blagoev B."/>
        </authorList>
    </citation>
    <scope>PHOSPHORYLATION [LARGE SCALE ANALYSIS] AT SER-52 AND THR-54</scope>
    <scope>IDENTIFICATION BY MASS SPECTROMETRY [LARGE SCALE ANALYSIS]</scope>
</reference>
<reference key="17">
    <citation type="journal article" date="2013" name="J. Proteome Res.">
        <title>Toward a comprehensive characterization of a human cancer cell phosphoproteome.</title>
        <authorList>
            <person name="Zhou H."/>
            <person name="Di Palma S."/>
            <person name="Preisinger C."/>
            <person name="Peng M."/>
            <person name="Polat A.N."/>
            <person name="Heck A.J."/>
            <person name="Mohammed S."/>
        </authorList>
    </citation>
    <scope>PHOSPHORYLATION [LARGE SCALE ANALYSIS] AT SER-49; SER-52 AND SER-56</scope>
    <scope>IDENTIFICATION BY MASS SPECTROMETRY [LARGE SCALE ANALYSIS]</scope>
    <source>
        <tissue>Cervix carcinoma</tissue>
        <tissue>Erythroleukemia</tissue>
    </source>
</reference>
<evidence type="ECO:0000250" key="1">
    <source>
        <dbReference type="UniProtKB" id="Q8K2P7"/>
    </source>
</evidence>
<evidence type="ECO:0000250" key="2">
    <source>
        <dbReference type="UniProtKB" id="Q9JM15"/>
    </source>
</evidence>
<evidence type="ECO:0000255" key="3"/>
<evidence type="ECO:0000255" key="4">
    <source>
        <dbReference type="PROSITE-ProRule" id="PRU00114"/>
    </source>
</evidence>
<evidence type="ECO:0000269" key="5">
    <source>
    </source>
</evidence>
<evidence type="ECO:0000269" key="6">
    <source>
    </source>
</evidence>
<evidence type="ECO:0000269" key="7">
    <source>
    </source>
</evidence>
<evidence type="ECO:0000269" key="8">
    <source>
    </source>
</evidence>
<evidence type="ECO:0000269" key="9">
    <source>
    </source>
</evidence>
<evidence type="ECO:0000269" key="10">
    <source>
    </source>
</evidence>
<evidence type="ECO:0000303" key="11">
    <source>
    </source>
</evidence>
<evidence type="ECO:0000303" key="12">
    <source>
    </source>
</evidence>
<evidence type="ECO:0000305" key="13"/>
<evidence type="ECO:0007744" key="14">
    <source>
    </source>
</evidence>
<evidence type="ECO:0007744" key="15">
    <source>
    </source>
</evidence>
<evidence type="ECO:0007744" key="16">
    <source>
    </source>
</evidence>
<evidence type="ECO:0007744" key="17">
    <source>
    </source>
</evidence>
<comment type="function">
    <text evidence="1 2 5 6 10">Symporter that cotransports short-chain neutral amino acids and sodium ions from the extraccellular to the intracellular side of the cell membrane (PubMed:10891391, PubMed:20599747). The transport is elctrogenic, pH dependent and driven by the Na(+) electrochemical gradient (PubMed:10891391). Participates in the astroglia-derived glutamine transport into GABAergic interneurons for neurotransmitter GABA de novo synthesis (By similarity). May also contributes to amino acid transport in placental trophoblasts (PubMed:20599747). Also regulates synaptic plasticity (PubMed:12388062).</text>
</comment>
<comment type="catalytic activity">
    <reaction evidence="2">
        <text>L-glutamine(in) + Na(+)(in) = L-glutamine(out) + Na(+)(out)</text>
        <dbReference type="Rhea" id="RHEA:68236"/>
        <dbReference type="ChEBI" id="CHEBI:29101"/>
        <dbReference type="ChEBI" id="CHEBI:58359"/>
    </reaction>
    <physiologicalReaction direction="right-to-left" evidence="2">
        <dbReference type="Rhea" id="RHEA:68238"/>
    </physiologicalReaction>
</comment>
<comment type="catalytic activity">
    <reaction evidence="2">
        <text>L-alanine(in) + Na(+)(in) = L-alanine(out) + Na(+)(out)</text>
        <dbReference type="Rhea" id="RHEA:29283"/>
        <dbReference type="ChEBI" id="CHEBI:29101"/>
        <dbReference type="ChEBI" id="CHEBI:57972"/>
    </reaction>
    <physiologicalReaction direction="right-to-left" evidence="2">
        <dbReference type="Rhea" id="RHEA:29285"/>
    </physiologicalReaction>
</comment>
<comment type="catalytic activity">
    <reaction evidence="2">
        <text>L-asparagine(in) + Na(+)(in) = L-asparagine(out) + Na(+)(out)</text>
        <dbReference type="Rhea" id="RHEA:71383"/>
        <dbReference type="ChEBI" id="CHEBI:29101"/>
        <dbReference type="ChEBI" id="CHEBI:58048"/>
    </reaction>
    <physiologicalReaction direction="right-to-left" evidence="2">
        <dbReference type="Rhea" id="RHEA:71385"/>
    </physiologicalReaction>
</comment>
<comment type="catalytic activity">
    <reaction evidence="2">
        <text>L-histidine(in) + Na(+)(in) = L-histidine(out) + Na(+)(out)</text>
        <dbReference type="Rhea" id="RHEA:71583"/>
        <dbReference type="ChEBI" id="CHEBI:29101"/>
        <dbReference type="ChEBI" id="CHEBI:57595"/>
    </reaction>
    <physiologicalReaction direction="right-to-left" evidence="2">
        <dbReference type="Rhea" id="RHEA:71585"/>
    </physiologicalReaction>
</comment>
<comment type="catalytic activity">
    <reaction evidence="2">
        <text>L-serine(in) + Na(+)(in) = L-serine(out) + Na(+)(out)</text>
        <dbReference type="Rhea" id="RHEA:29575"/>
        <dbReference type="ChEBI" id="CHEBI:29101"/>
        <dbReference type="ChEBI" id="CHEBI:33384"/>
    </reaction>
    <physiologicalReaction direction="right-to-left" evidence="2">
        <dbReference type="Rhea" id="RHEA:29577"/>
    </physiologicalReaction>
</comment>
<comment type="catalytic activity">
    <reaction evidence="2">
        <text>L-cysteine(in) + Na(+)(in) = L-cysteine(out) + Na(+)(out)</text>
        <dbReference type="Rhea" id="RHEA:68232"/>
        <dbReference type="ChEBI" id="CHEBI:29101"/>
        <dbReference type="ChEBI" id="CHEBI:35235"/>
    </reaction>
    <physiologicalReaction direction="right-to-left" evidence="2">
        <dbReference type="Rhea" id="RHEA:68234"/>
    </physiologicalReaction>
</comment>
<comment type="catalytic activity">
    <reaction evidence="2">
        <text>L-methionine(in) + Na(+)(in) = L-methionine(out) + Na(+)(out)</text>
        <dbReference type="Rhea" id="RHEA:68240"/>
        <dbReference type="ChEBI" id="CHEBI:29101"/>
        <dbReference type="ChEBI" id="CHEBI:57844"/>
    </reaction>
    <physiologicalReaction direction="right-to-left" evidence="2">
        <dbReference type="Rhea" id="RHEA:68242"/>
    </physiologicalReaction>
</comment>
<comment type="catalytic activity">
    <reaction evidence="2">
        <text>glycine(in) + Na(+)(in) = glycine(out) + Na(+)(out)</text>
        <dbReference type="Rhea" id="RHEA:68228"/>
        <dbReference type="ChEBI" id="CHEBI:29101"/>
        <dbReference type="ChEBI" id="CHEBI:57305"/>
    </reaction>
    <physiologicalReaction direction="right-to-left" evidence="2">
        <dbReference type="Rhea" id="RHEA:68230"/>
    </physiologicalReaction>
</comment>
<comment type="catalytic activity">
    <reaction evidence="2">
        <text>L-threonine(in) + Na(+)(in) = L-threonine(out) + Na(+)(out)</text>
        <dbReference type="Rhea" id="RHEA:69999"/>
        <dbReference type="ChEBI" id="CHEBI:29101"/>
        <dbReference type="ChEBI" id="CHEBI:57926"/>
    </reaction>
    <physiologicalReaction direction="right-to-left" evidence="2">
        <dbReference type="Rhea" id="RHEA:70001"/>
    </physiologicalReaction>
</comment>
<comment type="catalytic activity">
    <reaction evidence="2">
        <text>L-proline(in) + Na(+)(in) = L-proline(out) + Na(+)(out)</text>
        <dbReference type="Rhea" id="RHEA:28967"/>
        <dbReference type="ChEBI" id="CHEBI:29101"/>
        <dbReference type="ChEBI" id="CHEBI:60039"/>
    </reaction>
    <physiologicalReaction direction="right-to-left" evidence="2">
        <dbReference type="Rhea" id="RHEA:28969"/>
    </physiologicalReaction>
</comment>
<comment type="activity regulation">
    <text evidence="2">Inhibited by alpha-(methylamino)isobutyric acid (MeAIB). Inhibited by lithium, potassium, choline ions, N-methylglucamine. The pH dependence has an allosteric effect on the transport.</text>
</comment>
<comment type="biophysicochemical properties">
    <kinetics>
        <KM evidence="5">890 uM for alpha-(methylamino)isobutyric acid (MeAIB) (at pH 8.5)</KM>
    </kinetics>
</comment>
<comment type="interaction">
    <interactant intactId="EBI-9978441">
        <id>Q9H2H9</id>
    </interactant>
    <interactant intactId="EBI-19125216">
        <id>Q86WK6</id>
        <label>AMIGO1</label>
    </interactant>
    <organismsDiffer>false</organismsDiffer>
    <experiments>3</experiments>
</comment>
<comment type="interaction">
    <interactant intactId="EBI-9978441">
        <id>Q9H2H9</id>
    </interactant>
    <interactant intactId="EBI-13059134">
        <id>Q13520</id>
        <label>AQP6</label>
    </interactant>
    <organismsDiffer>false</organismsDiffer>
    <experiments>3</experiments>
</comment>
<comment type="interaction">
    <interactant intactId="EBI-9978441">
        <id>Q9H2H9</id>
    </interactant>
    <interactant intactId="EBI-3922513">
        <id>O95393</id>
        <label>BMP10</label>
    </interactant>
    <organismsDiffer>false</organismsDiffer>
    <experiments>3</experiments>
</comment>
<comment type="interaction">
    <interactant intactId="EBI-9978441">
        <id>Q9H2H9</id>
    </interactant>
    <interactant intactId="EBI-12062109">
        <id>Q86Z23</id>
        <label>C1QL4</label>
    </interactant>
    <organismsDiffer>false</organismsDiffer>
    <experiments>3</experiments>
</comment>
<comment type="interaction">
    <interactant intactId="EBI-9978441">
        <id>Q9H2H9</id>
    </interactant>
    <interactant intactId="EBI-7797864">
        <id>P11912</id>
        <label>CD79A</label>
    </interactant>
    <organismsDiffer>false</organismsDiffer>
    <experiments>6</experiments>
</comment>
<comment type="interaction">
    <interactant intactId="EBI-9978441">
        <id>Q9H2H9</id>
    </interactant>
    <interactant intactId="EBI-743099">
        <id>Q969F0</id>
        <label>FATE1</label>
    </interactant>
    <organismsDiffer>false</organismsDiffer>
    <experiments>6</experiments>
</comment>
<comment type="interaction">
    <interactant intactId="EBI-9978441">
        <id>Q9H2H9</id>
    </interactant>
    <interactant intactId="EBI-2833872">
        <id>O15552</id>
        <label>FFAR2</label>
    </interactant>
    <organismsDiffer>false</organismsDiffer>
    <experiments>3</experiments>
</comment>
<comment type="interaction">
    <interactant intactId="EBI-9978441">
        <id>Q9H2H9</id>
    </interactant>
    <interactant intactId="EBI-13345167">
        <id>Q8TDT2</id>
        <label>GPR152</label>
    </interactant>
    <organismsDiffer>false</organismsDiffer>
    <experiments>3</experiments>
</comment>
<comment type="interaction">
    <interactant intactId="EBI-9978441">
        <id>Q9H2H9</id>
    </interactant>
    <interactant intactId="EBI-18076404">
        <id>O15529</id>
        <label>GPR42</label>
    </interactant>
    <organismsDiffer>false</organismsDiffer>
    <experiments>3</experiments>
</comment>
<comment type="interaction">
    <interactant intactId="EBI-9978441">
        <id>Q9H2H9</id>
    </interactant>
    <interactant intactId="EBI-10232876">
        <id>Q14416</id>
        <label>GRM2</label>
    </interactant>
    <organismsDiffer>false</organismsDiffer>
    <experiments>3</experiments>
</comment>
<comment type="interaction">
    <interactant intactId="EBI-9978441">
        <id>Q9H2H9</id>
    </interactant>
    <interactant intactId="EBI-720480">
        <id>P24593</id>
        <label>IGFBP5</label>
    </interactant>
    <organismsDiffer>false</organismsDiffer>
    <experiments>4</experiments>
</comment>
<comment type="interaction">
    <interactant intactId="EBI-9978441">
        <id>Q9H2H9</id>
    </interactant>
    <interactant intactId="EBI-12838366">
        <id>Q01638-2</id>
        <label>IL1RL1</label>
    </interactant>
    <organismsDiffer>false</organismsDiffer>
    <experiments>3</experiments>
</comment>
<comment type="interaction">
    <interactant intactId="EBI-9978441">
        <id>Q9H2H9</id>
    </interactant>
    <interactant intactId="EBI-16427978">
        <id>Q9BQ51</id>
        <label>PDCD1LG2</label>
    </interactant>
    <organismsDiffer>false</organismsDiffer>
    <experiments>3</experiments>
</comment>
<comment type="interaction">
    <interactant intactId="EBI-9978441">
        <id>Q9H2H9</id>
    </interactant>
    <interactant intactId="EBI-1050125">
        <id>O15173</id>
        <label>PGRMC2</label>
    </interactant>
    <organismsDiffer>false</organismsDiffer>
    <experiments>3</experiments>
</comment>
<comment type="interaction">
    <interactant intactId="EBI-9978441">
        <id>Q9H2H9</id>
    </interactant>
    <interactant intactId="EBI-2845982">
        <id>Q01453</id>
        <label>PMP22</label>
    </interactant>
    <organismsDiffer>false</organismsDiffer>
    <experiments>3</experiments>
</comment>
<comment type="interaction">
    <interactant intactId="EBI-9978441">
        <id>Q9H2H9</id>
    </interactant>
    <interactant intactId="EBI-1052363">
        <id>Q9NS64</id>
        <label>RPRM</label>
    </interactant>
    <organismsDiffer>false</organismsDiffer>
    <experiments>3</experiments>
</comment>
<comment type="interaction">
    <interactant intactId="EBI-9978441">
        <id>Q9H2H9</id>
    </interactant>
    <interactant intactId="EBI-12825395">
        <id>O95968</id>
        <label>SCGB1D1</label>
    </interactant>
    <organismsDiffer>false</organismsDiffer>
    <experiments>3</experiments>
</comment>
<comment type="interaction">
    <interactant intactId="EBI-9978441">
        <id>Q9H2H9</id>
    </interactant>
    <interactant intactId="EBI-17247926">
        <id>Q9NY72</id>
        <label>SCN3B</label>
    </interactant>
    <organismsDiffer>false</organismsDiffer>
    <experiments>3</experiments>
</comment>
<comment type="interaction">
    <interactant intactId="EBI-9978441">
        <id>Q9H2H9</id>
    </interactant>
    <interactant intactId="EBI-749270">
        <id>Q8N6R1</id>
        <label>SERP2</label>
    </interactant>
    <organismsDiffer>false</organismsDiffer>
    <experiments>3</experiments>
</comment>
<comment type="interaction">
    <interactant intactId="EBI-9978441">
        <id>Q9H2H9</id>
    </interactant>
    <interactant intactId="EBI-3923031">
        <id>Q14973</id>
        <label>SLC10A1</label>
    </interactant>
    <organismsDiffer>false</organismsDiffer>
    <experiments>3</experiments>
</comment>
<comment type="interaction">
    <interactant intactId="EBI-9978441">
        <id>Q9H2H9</id>
    </interactant>
    <interactant intactId="EBI-18159983">
        <id>Q3KNW5</id>
        <label>SLC10A6</label>
    </interactant>
    <organismsDiffer>false</organismsDiffer>
    <experiments>3</experiments>
</comment>
<comment type="interaction">
    <interactant intactId="EBI-9978441">
        <id>Q9H2H9</id>
    </interactant>
    <interactant intactId="EBI-12808018">
        <id>Q9UKG4</id>
        <label>SLC13A4</label>
    </interactant>
    <organismsDiffer>false</organismsDiffer>
    <experiments>3</experiments>
</comment>
<comment type="interaction">
    <interactant intactId="EBI-9978441">
        <id>Q9H2H9</id>
    </interactant>
    <interactant intactId="EBI-741850">
        <id>Q9BZL3</id>
        <label>SMIM3</label>
    </interactant>
    <organismsDiffer>false</organismsDiffer>
    <experiments>3</experiments>
</comment>
<comment type="interaction">
    <interactant intactId="EBI-9978441">
        <id>Q9H2H9</id>
    </interactant>
    <interactant intactId="EBI-17280858">
        <id>Q8WWF3</id>
        <label>SSMEM1</label>
    </interactant>
    <organismsDiffer>false</organismsDiffer>
    <experiments>3</experiments>
</comment>
<comment type="interaction">
    <interactant intactId="EBI-9978441">
        <id>Q9H2H9</id>
    </interactant>
    <interactant intactId="EBI-12200293">
        <id>P0DN84</id>
        <label>STRIT1</label>
    </interactant>
    <organismsDiffer>false</organismsDiffer>
    <experiments>3</experiments>
</comment>
<comment type="interaction">
    <interactant intactId="EBI-9978441">
        <id>Q9H2H9</id>
    </interactant>
    <interactant intactId="EBI-2852148">
        <id>Q9H2L4</id>
        <label>TMEM60</label>
    </interactant>
    <organismsDiffer>false</organismsDiffer>
    <experiments>3</experiments>
</comment>
<comment type="interaction">
    <interactant intactId="EBI-9978441">
        <id>Q9H2H9</id>
    </interactant>
    <interactant intactId="EBI-11724433">
        <id>Q6ZT21</id>
        <label>TMPPE</label>
    </interactant>
    <organismsDiffer>false</organismsDiffer>
    <experiments>3</experiments>
</comment>
<comment type="interaction">
    <interactant intactId="EBI-9978441">
        <id>Q9H2H9</id>
    </interactant>
    <interactant intactId="EBI-11988865">
        <id>A5PKU2</id>
        <label>TUSC5</label>
    </interactant>
    <organismsDiffer>false</organismsDiffer>
    <experiments>3</experiments>
</comment>
<comment type="subcellular location">
    <subcellularLocation>
        <location evidence="7">Cell membrane</location>
        <topology evidence="2">Multi-pass membrane protein</topology>
    </subcellularLocation>
    <text evidence="2">Restricted to the somatodendritic compartment of neurons. Found in the cellular processes of neurons in the developing brain.</text>
</comment>
<comment type="tissue specificity">
    <text evidence="5 6 7 8 10">Expressed in the cerebral cortex by pyramidal and GABAergic neurons, astrocytes and other non-neuronal cells (at protein level). Expressed in placenta, heart, lung, skeletal muscle, spleen, stomach and testis (PubMed:10891391, PubMed:12388062, PubMed:15054072, PubMed:16148032). Highly expressed in cytotrophoblast cells from term placenta (PubMed:20599747).</text>
</comment>
<comment type="induction">
    <text evidence="6 9">Down-regulated by bacterial lipopolysaccharides (LPS) in glial cells (PubMed:12388062). Down-regulated upon hypoxia (PubMed:16583402).</text>
</comment>
<comment type="PTM">
    <text evidence="1">N-glycosylation plays an important role in the L-glutamine transport.</text>
</comment>
<comment type="similarity">
    <text evidence="13">Belongs to the amino acid/polyamine transporter 2 family.</text>
</comment>
<comment type="sequence caution" evidence="13">
    <conflict type="frameshift">
        <sequence resource="EMBL-CDS" id="AAG44546"/>
    </conflict>
</comment>
<comment type="sequence caution" evidence="13">
    <conflict type="erroneous initiation">
        <sequence resource="EMBL-CDS" id="BAC11186"/>
    </conflict>
    <text>Truncated N-terminus.</text>
</comment>
<sequence>MMHFKSGLELTELQNMTVPEDDNISNDSNDFTEVENGQINSKFISDRESRRSLTNSHLEKKKCDEYIPGTTSLGMSVFNLSNAIMGSGILGLAFALANTGILLFLVLLTSVTLLSIYSINLLLICSKETGCMVYEKLGEQVFGTTGKFVIFGATSLQNTGAMLSYLFIVKNELPSAIKFLMGKEETFSAWYVDGRVLVVIVTFGIILPLCLLKNLGYLGYTSGFSLSCMVFFLIVVIYKKFQIPCIVPELNSTISANSTNADTCTPKYVTFNSKTVYALPTIAFAFVCHPSVLPIYSELKDRSQKKMQMVSNISFFAMFVMYFLTAIFGYLTFYDNVQSDLLHKYQSKDDILILTVRLAVIVAVILTVPVLFFTVRSSLFELAKKTKFNLCRHTVVTCILLVVINLLVIFIPSMKDIFGVVGVTSANMLIFILPSSLYLKITDQDGDKGTQRIWAALFLGLGVLFSLVSIPLVIYDWACSSSSDEGH</sequence>
<feature type="chain" id="PRO_0000310475" description="Sodium-coupled neutral amino acid symporter 1">
    <location>
        <begin position="1"/>
        <end position="487"/>
    </location>
</feature>
<feature type="topological domain" description="Cytoplasmic" evidence="3">
    <location>
        <begin position="1"/>
        <end position="74"/>
    </location>
</feature>
<feature type="transmembrane region" description="Helical" evidence="3">
    <location>
        <begin position="75"/>
        <end position="97"/>
    </location>
</feature>
<feature type="topological domain" description="Extracellular" evidence="3">
    <location>
        <begin position="98"/>
        <end position="112"/>
    </location>
</feature>
<feature type="transmembrane region" description="Helical" evidence="3">
    <location>
        <begin position="113"/>
        <end position="133"/>
    </location>
</feature>
<feature type="topological domain" description="Cytoplasmic" evidence="3">
    <location>
        <begin position="134"/>
        <end position="147"/>
    </location>
</feature>
<feature type="transmembrane region" description="Helical" evidence="3">
    <location>
        <begin position="148"/>
        <end position="168"/>
    </location>
</feature>
<feature type="topological domain" description="Extracellular" evidence="3">
    <location>
        <begin position="169"/>
        <end position="188"/>
    </location>
</feature>
<feature type="transmembrane region" description="Helical" evidence="3">
    <location>
        <begin position="189"/>
        <end position="211"/>
    </location>
</feature>
<feature type="topological domain" description="Cytoplasmic" evidence="3">
    <location>
        <begin position="212"/>
        <end position="216"/>
    </location>
</feature>
<feature type="transmembrane region" description="Helical" evidence="3">
    <location>
        <begin position="217"/>
        <end position="237"/>
    </location>
</feature>
<feature type="topological domain" description="Extracellular" evidence="3">
    <location>
        <begin position="238"/>
        <end position="275"/>
    </location>
</feature>
<feature type="transmembrane region" description="Helical" evidence="3">
    <location>
        <begin position="276"/>
        <end position="296"/>
    </location>
</feature>
<feature type="topological domain" description="Cytoplasmic" evidence="3">
    <location>
        <begin position="297"/>
        <end position="312"/>
    </location>
</feature>
<feature type="transmembrane region" description="Helical" evidence="3">
    <location>
        <begin position="313"/>
        <end position="333"/>
    </location>
</feature>
<feature type="topological domain" description="Extracellular" evidence="3">
    <location>
        <begin position="334"/>
        <end position="350"/>
    </location>
</feature>
<feature type="transmembrane region" description="Helical" evidence="3">
    <location>
        <begin position="351"/>
        <end position="371"/>
    </location>
</feature>
<feature type="topological domain" description="Cytoplasmic" evidence="3">
    <location>
        <begin position="372"/>
        <end position="393"/>
    </location>
</feature>
<feature type="transmembrane region" description="Helical" evidence="3">
    <location>
        <begin position="394"/>
        <end position="414"/>
    </location>
</feature>
<feature type="topological domain" description="Extracellular" evidence="3">
    <location>
        <begin position="415"/>
        <end position="416"/>
    </location>
</feature>
<feature type="transmembrane region" description="Helical" evidence="3">
    <location>
        <begin position="417"/>
        <end position="437"/>
    </location>
</feature>
<feature type="topological domain" description="Cytoplasmic" evidence="3">
    <location>
        <begin position="438"/>
        <end position="452"/>
    </location>
</feature>
<feature type="transmembrane region" description="Helical" evidence="3">
    <location>
        <begin position="453"/>
        <end position="473"/>
    </location>
</feature>
<feature type="topological domain" description="Extracellular" evidence="3">
    <location>
        <begin position="474"/>
        <end position="487"/>
    </location>
</feature>
<feature type="modified residue" description="Phosphoserine" evidence="1">
    <location>
        <position position="6"/>
    </location>
</feature>
<feature type="modified residue" description="Phosphothreonine" evidence="1">
    <location>
        <position position="11"/>
    </location>
</feature>
<feature type="modified residue" description="Phosphoserine" evidence="14">
    <location>
        <position position="25"/>
    </location>
</feature>
<feature type="modified residue" description="Phosphoserine" evidence="14">
    <location>
        <position position="28"/>
    </location>
</feature>
<feature type="modified residue" description="Phosphoserine" evidence="17">
    <location>
        <position position="49"/>
    </location>
</feature>
<feature type="modified residue" description="Phosphoserine" evidence="14 15 16 17">
    <location>
        <position position="52"/>
    </location>
</feature>
<feature type="modified residue" description="Phosphothreonine" evidence="14 15 16">
    <location>
        <position position="54"/>
    </location>
</feature>
<feature type="modified residue" description="Phosphoserine" evidence="14 15 17">
    <location>
        <position position="56"/>
    </location>
</feature>
<feature type="glycosylation site" description="N-linked (GlcNAc...) asparagine" evidence="3">
    <location>
        <position position="251"/>
    </location>
</feature>
<feature type="glycosylation site" description="N-linked (GlcNAc...) asparagine" evidence="3">
    <location>
        <position position="257"/>
    </location>
</feature>
<feature type="disulfide bond" evidence="4">
    <location>
        <begin position="245"/>
        <end position="264"/>
    </location>
</feature>
<feature type="sequence conflict" description="In Ref. 3; BAB55394." evidence="13" ref="3">
    <original>L</original>
    <variation>P</variation>
    <location>
        <position position="107"/>
    </location>
</feature>
<feature type="sequence conflict" description="In Ref. 4; BAC11310." evidence="13" ref="4">
    <original>F</original>
    <variation>V</variation>
    <location>
        <position position="203"/>
    </location>
</feature>
<feature type="sequence conflict" description="In Ref. 2; AAG44546." evidence="13" ref="2">
    <original>V</original>
    <variation>D</variation>
    <location>
        <position position="375"/>
    </location>
</feature>
<feature type="sequence conflict" description="In Ref. 2; AAG44546." evidence="13" ref="2">
    <original>SD</original>
    <variation>NG</variation>
    <location>
        <begin position="483"/>
        <end position="484"/>
    </location>
</feature>
<dbReference type="EMBL" id="AF271070">
    <property type="protein sequence ID" value="AAG39354.1"/>
    <property type="molecule type" value="mRNA"/>
</dbReference>
<dbReference type="EMBL" id="AF247166">
    <property type="protein sequence ID" value="AAG44546.1"/>
    <property type="status" value="ALT_FRAME"/>
    <property type="molecule type" value="mRNA"/>
</dbReference>
<dbReference type="EMBL" id="AK027825">
    <property type="protein sequence ID" value="BAB55394.1"/>
    <property type="molecule type" value="mRNA"/>
</dbReference>
<dbReference type="EMBL" id="AK074758">
    <property type="protein sequence ID" value="BAC11186.1"/>
    <property type="status" value="ALT_INIT"/>
    <property type="molecule type" value="mRNA"/>
</dbReference>
<dbReference type="EMBL" id="AK074949">
    <property type="protein sequence ID" value="BAC11310.1"/>
    <property type="molecule type" value="mRNA"/>
</dbReference>
<dbReference type="EMBL" id="CH471111">
    <property type="protein sequence ID" value="EAW57895.1"/>
    <property type="molecule type" value="Genomic_DNA"/>
</dbReference>
<dbReference type="EMBL" id="BC010620">
    <property type="protein sequence ID" value="AAH10620.1"/>
    <property type="molecule type" value="mRNA"/>
</dbReference>
<dbReference type="CCDS" id="CCDS41774.1"/>
<dbReference type="PIR" id="JC7328">
    <property type="entry name" value="JC7328"/>
</dbReference>
<dbReference type="RefSeq" id="NP_001070952.1">
    <property type="nucleotide sequence ID" value="NM_001077484.2"/>
</dbReference>
<dbReference type="RefSeq" id="NP_001265316.1">
    <property type="nucleotide sequence ID" value="NM_001278387.2"/>
</dbReference>
<dbReference type="RefSeq" id="NP_001265317.1">
    <property type="nucleotide sequence ID" value="NM_001278388.2"/>
</dbReference>
<dbReference type="RefSeq" id="NP_001265318.1">
    <property type="nucleotide sequence ID" value="NM_001278389.2"/>
</dbReference>
<dbReference type="RefSeq" id="NP_109599.3">
    <property type="nucleotide sequence ID" value="NM_030674.3"/>
</dbReference>
<dbReference type="RefSeq" id="XP_047285544.1">
    <property type="nucleotide sequence ID" value="XM_047429588.1"/>
</dbReference>
<dbReference type="RefSeq" id="XP_047285545.1">
    <property type="nucleotide sequence ID" value="XM_047429589.1"/>
</dbReference>
<dbReference type="RefSeq" id="XP_047285546.1">
    <property type="nucleotide sequence ID" value="XM_047429590.1"/>
</dbReference>
<dbReference type="RefSeq" id="XP_047285547.1">
    <property type="nucleotide sequence ID" value="XM_047429591.1"/>
</dbReference>
<dbReference type="RefSeq" id="XP_047285548.1">
    <property type="nucleotide sequence ID" value="XM_047429592.1"/>
</dbReference>
<dbReference type="RefSeq" id="XP_047285549.1">
    <property type="nucleotide sequence ID" value="XM_047429593.1"/>
</dbReference>
<dbReference type="RefSeq" id="XP_047285550.1">
    <property type="nucleotide sequence ID" value="XM_047429594.1"/>
</dbReference>
<dbReference type="RefSeq" id="XP_047285551.1">
    <property type="nucleotide sequence ID" value="XM_047429595.1"/>
</dbReference>
<dbReference type="RefSeq" id="XP_047285552.1">
    <property type="nucleotide sequence ID" value="XM_047429596.1"/>
</dbReference>
<dbReference type="RefSeq" id="XP_047285553.1">
    <property type="nucleotide sequence ID" value="XM_047429597.1"/>
</dbReference>
<dbReference type="RefSeq" id="XP_047285554.1">
    <property type="nucleotide sequence ID" value="XM_047429598.1"/>
</dbReference>
<dbReference type="RefSeq" id="XP_054229297.1">
    <property type="nucleotide sequence ID" value="XM_054373322.1"/>
</dbReference>
<dbReference type="RefSeq" id="XP_054229298.1">
    <property type="nucleotide sequence ID" value="XM_054373323.1"/>
</dbReference>
<dbReference type="RefSeq" id="XP_054229299.1">
    <property type="nucleotide sequence ID" value="XM_054373324.1"/>
</dbReference>
<dbReference type="RefSeq" id="XP_054229300.1">
    <property type="nucleotide sequence ID" value="XM_054373325.1"/>
</dbReference>
<dbReference type="RefSeq" id="XP_054229301.1">
    <property type="nucleotide sequence ID" value="XM_054373326.1"/>
</dbReference>
<dbReference type="RefSeq" id="XP_054229302.1">
    <property type="nucleotide sequence ID" value="XM_054373327.1"/>
</dbReference>
<dbReference type="RefSeq" id="XP_054229303.1">
    <property type="nucleotide sequence ID" value="XM_054373328.1"/>
</dbReference>
<dbReference type="RefSeq" id="XP_054229304.1">
    <property type="nucleotide sequence ID" value="XM_054373329.1"/>
</dbReference>
<dbReference type="RefSeq" id="XP_054229305.1">
    <property type="nucleotide sequence ID" value="XM_054373330.1"/>
</dbReference>
<dbReference type="RefSeq" id="XP_054229306.1">
    <property type="nucleotide sequence ID" value="XM_054373331.1"/>
</dbReference>
<dbReference type="RefSeq" id="XP_054229307.1">
    <property type="nucleotide sequence ID" value="XM_054373332.1"/>
</dbReference>
<dbReference type="SMR" id="Q9H2H9"/>
<dbReference type="BioGRID" id="123509">
    <property type="interactions" value="195"/>
</dbReference>
<dbReference type="FunCoup" id="Q9H2H9">
    <property type="interactions" value="197"/>
</dbReference>
<dbReference type="IntAct" id="Q9H2H9">
    <property type="interactions" value="109"/>
</dbReference>
<dbReference type="MINT" id="Q9H2H9"/>
<dbReference type="STRING" id="9606.ENSP00000449756"/>
<dbReference type="DrugBank" id="DB00174">
    <property type="generic name" value="Asparagine"/>
</dbReference>
<dbReference type="DrugBank" id="DB00130">
    <property type="generic name" value="L-Glutamine"/>
</dbReference>
<dbReference type="TCDB" id="2.A.18.6.14">
    <property type="family name" value="the amino acid/auxin permease (aaap) family"/>
</dbReference>
<dbReference type="GlyCosmos" id="Q9H2H9">
    <property type="glycosylation" value="2 sites, No reported glycans"/>
</dbReference>
<dbReference type="GlyGen" id="Q9H2H9">
    <property type="glycosylation" value="3 sites, 2 N-linked glycans (2 sites), 1 O-linked glycan (1 site)"/>
</dbReference>
<dbReference type="iPTMnet" id="Q9H2H9"/>
<dbReference type="PhosphoSitePlus" id="Q9H2H9"/>
<dbReference type="SwissPalm" id="Q9H2H9"/>
<dbReference type="BioMuta" id="SLC38A1"/>
<dbReference type="DMDM" id="74733561"/>
<dbReference type="jPOST" id="Q9H2H9"/>
<dbReference type="MassIVE" id="Q9H2H9"/>
<dbReference type="PaxDb" id="9606-ENSP00000449756"/>
<dbReference type="PeptideAtlas" id="Q9H2H9"/>
<dbReference type="ProteomicsDB" id="80552"/>
<dbReference type="Pumba" id="Q9H2H9"/>
<dbReference type="ABCD" id="Q9H2H9">
    <property type="antibodies" value="2 sequenced antibodies"/>
</dbReference>
<dbReference type="Antibodypedia" id="7400">
    <property type="antibodies" value="207 antibodies from 31 providers"/>
</dbReference>
<dbReference type="DNASU" id="81539"/>
<dbReference type="Ensembl" id="ENST00000398637.10">
    <property type="protein sequence ID" value="ENSP00000381634.4"/>
    <property type="gene ID" value="ENSG00000111371.16"/>
</dbReference>
<dbReference type="Ensembl" id="ENST00000439706.5">
    <property type="protein sequence ID" value="ENSP00000398142.1"/>
    <property type="gene ID" value="ENSG00000111371.16"/>
</dbReference>
<dbReference type="Ensembl" id="ENST00000546893.5">
    <property type="protein sequence ID" value="ENSP00000447853.1"/>
    <property type="gene ID" value="ENSG00000111371.16"/>
</dbReference>
<dbReference type="Ensembl" id="ENST00000549049.5">
    <property type="protein sequence ID" value="ENSP00000449607.1"/>
    <property type="gene ID" value="ENSG00000111371.16"/>
</dbReference>
<dbReference type="GeneID" id="81539"/>
<dbReference type="KEGG" id="hsa:81539"/>
<dbReference type="MANE-Select" id="ENST00000398637.10">
    <property type="protein sequence ID" value="ENSP00000381634.4"/>
    <property type="RefSeq nucleotide sequence ID" value="NM_030674.4"/>
    <property type="RefSeq protein sequence ID" value="NP_109599.3"/>
</dbReference>
<dbReference type="UCSC" id="uc001rpb.5">
    <property type="organism name" value="human"/>
</dbReference>
<dbReference type="AGR" id="HGNC:13447"/>
<dbReference type="CTD" id="81539"/>
<dbReference type="DisGeNET" id="81539"/>
<dbReference type="GeneCards" id="SLC38A1"/>
<dbReference type="HGNC" id="HGNC:13447">
    <property type="gene designation" value="SLC38A1"/>
</dbReference>
<dbReference type="HPA" id="ENSG00000111371">
    <property type="expression patterns" value="Low tissue specificity"/>
</dbReference>
<dbReference type="MIM" id="608490">
    <property type="type" value="gene"/>
</dbReference>
<dbReference type="neXtProt" id="NX_Q9H2H9"/>
<dbReference type="OpenTargets" id="ENSG00000111371"/>
<dbReference type="PharmGKB" id="PA37772"/>
<dbReference type="VEuPathDB" id="HostDB:ENSG00000111371"/>
<dbReference type="eggNOG" id="KOG1305">
    <property type="taxonomic scope" value="Eukaryota"/>
</dbReference>
<dbReference type="GeneTree" id="ENSGT00940000160716"/>
<dbReference type="HOGENOM" id="CLU_009020_0_2_1"/>
<dbReference type="InParanoid" id="Q9H2H9"/>
<dbReference type="OMA" id="CSAMAIY"/>
<dbReference type="OrthoDB" id="655540at2759"/>
<dbReference type="PAN-GO" id="Q9H2H9">
    <property type="GO annotations" value="4 GO annotations based on evolutionary models"/>
</dbReference>
<dbReference type="PhylomeDB" id="Q9H2H9"/>
<dbReference type="TreeFam" id="TF328787"/>
<dbReference type="PathwayCommons" id="Q9H2H9"/>
<dbReference type="Reactome" id="R-HSA-210455">
    <property type="pathway name" value="Astrocytic Glutamate-Glutamine Uptake And Metabolism"/>
</dbReference>
<dbReference type="Reactome" id="R-HSA-352230">
    <property type="pathway name" value="Amino acid transport across the plasma membrane"/>
</dbReference>
<dbReference type="SABIO-RK" id="Q9H2H9"/>
<dbReference type="SignaLink" id="Q9H2H9"/>
<dbReference type="SIGNOR" id="Q9H2H9"/>
<dbReference type="BioGRID-ORCS" id="81539">
    <property type="hits" value="17 hits in 1160 CRISPR screens"/>
</dbReference>
<dbReference type="ChiTaRS" id="SLC38A1">
    <property type="organism name" value="human"/>
</dbReference>
<dbReference type="GeneWiki" id="SLC38A1"/>
<dbReference type="GenomeRNAi" id="81539"/>
<dbReference type="Pharos" id="Q9H2H9">
    <property type="development level" value="Tbio"/>
</dbReference>
<dbReference type="PRO" id="PR:Q9H2H9"/>
<dbReference type="Proteomes" id="UP000005640">
    <property type="component" value="Chromosome 12"/>
</dbReference>
<dbReference type="RNAct" id="Q9H2H9">
    <property type="molecule type" value="protein"/>
</dbReference>
<dbReference type="Bgee" id="ENSG00000111371">
    <property type="expression patterns" value="Expressed in lateral nuclear group of thalamus and 202 other cell types or tissues"/>
</dbReference>
<dbReference type="ExpressionAtlas" id="Q9H2H9">
    <property type="expression patterns" value="baseline and differential"/>
</dbReference>
<dbReference type="GO" id="GO:0030424">
    <property type="term" value="C:axon"/>
    <property type="evidence" value="ECO:0007669"/>
    <property type="project" value="Ensembl"/>
</dbReference>
<dbReference type="GO" id="GO:0016323">
    <property type="term" value="C:basolateral plasma membrane"/>
    <property type="evidence" value="ECO:0000250"/>
    <property type="project" value="ARUK-UCL"/>
</dbReference>
<dbReference type="GO" id="GO:0098591">
    <property type="term" value="C:external side of apical plasma membrane"/>
    <property type="evidence" value="ECO:0000250"/>
    <property type="project" value="ARUK-UCL"/>
</dbReference>
<dbReference type="GO" id="GO:0070062">
    <property type="term" value="C:extracellular exosome"/>
    <property type="evidence" value="ECO:0007005"/>
    <property type="project" value="UniProtKB"/>
</dbReference>
<dbReference type="GO" id="GO:0016020">
    <property type="term" value="C:membrane"/>
    <property type="evidence" value="ECO:0000303"/>
    <property type="project" value="UniProtKB"/>
</dbReference>
<dbReference type="GO" id="GO:0043025">
    <property type="term" value="C:neuronal cell body"/>
    <property type="evidence" value="ECO:0000250"/>
    <property type="project" value="ARUK-UCL"/>
</dbReference>
<dbReference type="GO" id="GO:0005886">
    <property type="term" value="C:plasma membrane"/>
    <property type="evidence" value="ECO:0000314"/>
    <property type="project" value="ARUK-UCL"/>
</dbReference>
<dbReference type="GO" id="GO:0015655">
    <property type="term" value="F:alanine:sodium symporter activity"/>
    <property type="evidence" value="ECO:0000250"/>
    <property type="project" value="UniProtKB"/>
</dbReference>
<dbReference type="GO" id="GO:0015171">
    <property type="term" value="F:amino acid transmembrane transporter activity"/>
    <property type="evidence" value="ECO:0000304"/>
    <property type="project" value="Reactome"/>
</dbReference>
<dbReference type="GO" id="GO:0005283">
    <property type="term" value="F:amino acid:sodium symporter activity"/>
    <property type="evidence" value="ECO:0000250"/>
    <property type="project" value="UniProtKB"/>
</dbReference>
<dbReference type="GO" id="GO:0015375">
    <property type="term" value="F:glycine:sodium symporter activity"/>
    <property type="evidence" value="ECO:0000250"/>
    <property type="project" value="UniProtKB"/>
</dbReference>
<dbReference type="GO" id="GO:0015179">
    <property type="term" value="F:L-amino acid transmembrane transporter activity"/>
    <property type="evidence" value="ECO:0000250"/>
    <property type="project" value="ARUK-UCL"/>
</dbReference>
<dbReference type="GO" id="GO:0015186">
    <property type="term" value="F:L-glutamine transmembrane transporter activity"/>
    <property type="evidence" value="ECO:0000250"/>
    <property type="project" value="UniProtKB"/>
</dbReference>
<dbReference type="GO" id="GO:0015175">
    <property type="term" value="F:neutral L-amino acid transmembrane transporter activity"/>
    <property type="evidence" value="ECO:0000303"/>
    <property type="project" value="UniProtKB"/>
</dbReference>
<dbReference type="GO" id="GO:0005295">
    <property type="term" value="F:neutral L-amino acid:sodium symporter activity"/>
    <property type="evidence" value="ECO:0000250"/>
    <property type="project" value="ARUK-UCL"/>
</dbReference>
<dbReference type="GO" id="GO:0005298">
    <property type="term" value="F:proline:sodium symporter activity"/>
    <property type="evidence" value="ECO:0000250"/>
    <property type="project" value="UniProtKB"/>
</dbReference>
<dbReference type="GO" id="GO:0043090">
    <property type="term" value="P:amino acid import"/>
    <property type="evidence" value="ECO:0000250"/>
    <property type="project" value="UniProtKB"/>
</dbReference>
<dbReference type="GO" id="GO:0003333">
    <property type="term" value="P:amino acid transmembrane transport"/>
    <property type="evidence" value="ECO:0000318"/>
    <property type="project" value="GO_Central"/>
</dbReference>
<dbReference type="GO" id="GO:0006865">
    <property type="term" value="P:amino acid transport"/>
    <property type="evidence" value="ECO:0000304"/>
    <property type="project" value="Reactome"/>
</dbReference>
<dbReference type="GO" id="GO:0007565">
    <property type="term" value="P:female pregnancy"/>
    <property type="evidence" value="ECO:0007669"/>
    <property type="project" value="Ensembl"/>
</dbReference>
<dbReference type="GO" id="GO:0009449">
    <property type="term" value="P:gamma-aminobutyric acid biosynthetic process"/>
    <property type="evidence" value="ECO:0000250"/>
    <property type="project" value="UniProtKB"/>
</dbReference>
<dbReference type="GO" id="GO:0006868">
    <property type="term" value="P:glutamine transport"/>
    <property type="evidence" value="ECO:0000250"/>
    <property type="project" value="UniProtKB"/>
</dbReference>
<dbReference type="GO" id="GO:1902475">
    <property type="term" value="P:L-alpha-amino acid transmembrane transport"/>
    <property type="evidence" value="ECO:0000250"/>
    <property type="project" value="ARUK-UCL"/>
</dbReference>
<dbReference type="GO" id="GO:1903803">
    <property type="term" value="P:L-glutamine import across plasma membrane"/>
    <property type="evidence" value="ECO:0000250"/>
    <property type="project" value="UniProtKB"/>
</dbReference>
<dbReference type="GO" id="GO:0001504">
    <property type="term" value="P:neurotransmitter uptake"/>
    <property type="evidence" value="ECO:0000304"/>
    <property type="project" value="Reactome"/>
</dbReference>
<dbReference type="GO" id="GO:0015804">
    <property type="term" value="P:neutral amino acid transport"/>
    <property type="evidence" value="ECO:0000250"/>
    <property type="project" value="ARUK-UCL"/>
</dbReference>
<dbReference type="GO" id="GO:0048167">
    <property type="term" value="P:regulation of synaptic plasticity"/>
    <property type="evidence" value="ECO:0000250"/>
    <property type="project" value="UniProtKB"/>
</dbReference>
<dbReference type="GO" id="GO:0032228">
    <property type="term" value="P:regulation of synaptic transmission, GABAergic"/>
    <property type="evidence" value="ECO:0000250"/>
    <property type="project" value="UniProtKB"/>
</dbReference>
<dbReference type="GO" id="GO:0150104">
    <property type="term" value="P:transport across blood-brain barrier"/>
    <property type="evidence" value="ECO:0000303"/>
    <property type="project" value="ARUK-UCL"/>
</dbReference>
<dbReference type="InterPro" id="IPR013057">
    <property type="entry name" value="AA_transpt_TM"/>
</dbReference>
<dbReference type="PANTHER" id="PTHR22950">
    <property type="entry name" value="AMINO ACID TRANSPORTER"/>
    <property type="match status" value="1"/>
</dbReference>
<dbReference type="PANTHER" id="PTHR22950:SF184">
    <property type="entry name" value="SODIUM-COUPLED NEUTRAL AMINO ACID SYMPORTER 1"/>
    <property type="match status" value="1"/>
</dbReference>
<dbReference type="Pfam" id="PF01490">
    <property type="entry name" value="Aa_trans"/>
    <property type="match status" value="1"/>
</dbReference>
<keyword id="KW-0029">Amino-acid transport</keyword>
<keyword id="KW-1003">Cell membrane</keyword>
<keyword id="KW-1015">Disulfide bond</keyword>
<keyword id="KW-0325">Glycoprotein</keyword>
<keyword id="KW-0406">Ion transport</keyword>
<keyword id="KW-0472">Membrane</keyword>
<keyword id="KW-0597">Phosphoprotein</keyword>
<keyword id="KW-1267">Proteomics identification</keyword>
<keyword id="KW-1185">Reference proteome</keyword>
<keyword id="KW-0915">Sodium</keyword>
<keyword id="KW-0739">Sodium transport</keyword>
<keyword id="KW-0769">Symport</keyword>
<keyword id="KW-0812">Transmembrane</keyword>
<keyword id="KW-1133">Transmembrane helix</keyword>
<keyword id="KW-0813">Transport</keyword>
<gene>
    <name type="primary">SLC38A1</name>
    <name evidence="11" type="synonym">ATA1</name>
    <name type="synonym">NAT2</name>
    <name type="synonym">SAT1</name>
    <name evidence="12" type="synonym">SNAT1</name>
</gene>